<reference key="1">
    <citation type="journal article" date="2009" name="PLoS Genet.">
        <title>The genome of Nectria haematococca: contribution of supernumerary chromosomes to gene expansion.</title>
        <authorList>
            <person name="Coleman J.J."/>
            <person name="Rounsley S.D."/>
            <person name="Rodriguez-Carres M."/>
            <person name="Kuo A."/>
            <person name="Wasmann C.C."/>
            <person name="Grimwood J."/>
            <person name="Schmutz J."/>
            <person name="Taga M."/>
            <person name="White G.J."/>
            <person name="Zhou S."/>
            <person name="Schwartz D.C."/>
            <person name="Freitag M."/>
            <person name="Ma L.-J."/>
            <person name="Danchin E.G.J."/>
            <person name="Henrissat B."/>
            <person name="Coutinho P.M."/>
            <person name="Nelson D.R."/>
            <person name="Straney D."/>
            <person name="Napoli C.A."/>
            <person name="Barker B.M."/>
            <person name="Gribskov M."/>
            <person name="Rep M."/>
            <person name="Kroken S."/>
            <person name="Molnar I."/>
            <person name="Rensing C."/>
            <person name="Kennell J.C."/>
            <person name="Zamora J."/>
            <person name="Farman M.L."/>
            <person name="Selker E.U."/>
            <person name="Salamov A."/>
            <person name="Shapiro H."/>
            <person name="Pangilinan J."/>
            <person name="Lindquist E."/>
            <person name="Lamers C."/>
            <person name="Grigoriev I.V."/>
            <person name="Geiser D.M."/>
            <person name="Covert S.F."/>
            <person name="Temporini E."/>
            <person name="VanEtten H.D."/>
        </authorList>
    </citation>
    <scope>NUCLEOTIDE SEQUENCE [LARGE SCALE GENOMIC DNA]</scope>
    <source>
        <strain>ATCC MYA-4622 / CBS 123669 / FGSC 9596 / NRRL 45880 / 77-13-4</strain>
    </source>
</reference>
<dbReference type="EC" id="6.3.5.7" evidence="1"/>
<dbReference type="EMBL" id="GG698899">
    <property type="protein sequence ID" value="EEU45236.1"/>
    <property type="molecule type" value="Genomic_DNA"/>
</dbReference>
<dbReference type="RefSeq" id="XP_003050949.1">
    <property type="nucleotide sequence ID" value="XM_003050903.1"/>
</dbReference>
<dbReference type="SMR" id="C7YSE7"/>
<dbReference type="FunCoup" id="C7YSE7">
    <property type="interactions" value="361"/>
</dbReference>
<dbReference type="STRING" id="660122.C7YSE7"/>
<dbReference type="EnsemblFungi" id="NechaT104567">
    <property type="protein sequence ID" value="NechaP104567"/>
    <property type="gene ID" value="NechaG104567"/>
</dbReference>
<dbReference type="GeneID" id="9668183"/>
<dbReference type="KEGG" id="nhe:NECHADRAFT_104567"/>
<dbReference type="VEuPathDB" id="FungiDB:NECHADRAFT_104567"/>
<dbReference type="eggNOG" id="KOG1211">
    <property type="taxonomic scope" value="Eukaryota"/>
</dbReference>
<dbReference type="HOGENOM" id="CLU_009600_7_6_1"/>
<dbReference type="InParanoid" id="C7YSE7"/>
<dbReference type="OMA" id="QPASYCG"/>
<dbReference type="OrthoDB" id="421993at2759"/>
<dbReference type="Proteomes" id="UP000005206">
    <property type="component" value="Unassembled WGS sequence"/>
</dbReference>
<dbReference type="GO" id="GO:0030956">
    <property type="term" value="C:glutamyl-tRNA(Gln) amidotransferase complex"/>
    <property type="evidence" value="ECO:0007669"/>
    <property type="project" value="UniProtKB-UniRule"/>
</dbReference>
<dbReference type="GO" id="GO:0005739">
    <property type="term" value="C:mitochondrion"/>
    <property type="evidence" value="ECO:0007669"/>
    <property type="project" value="UniProtKB-SubCell"/>
</dbReference>
<dbReference type="GO" id="GO:0005524">
    <property type="term" value="F:ATP binding"/>
    <property type="evidence" value="ECO:0007669"/>
    <property type="project" value="UniProtKB-KW"/>
</dbReference>
<dbReference type="GO" id="GO:0050567">
    <property type="term" value="F:glutaminyl-tRNA synthase (glutamine-hydrolyzing) activity"/>
    <property type="evidence" value="ECO:0007669"/>
    <property type="project" value="UniProtKB-UniRule"/>
</dbReference>
<dbReference type="GO" id="GO:0070681">
    <property type="term" value="P:glutaminyl-tRNAGln biosynthesis via transamidation"/>
    <property type="evidence" value="ECO:0007669"/>
    <property type="project" value="UniProtKB-UniRule"/>
</dbReference>
<dbReference type="GO" id="GO:0032543">
    <property type="term" value="P:mitochondrial translation"/>
    <property type="evidence" value="ECO:0007669"/>
    <property type="project" value="UniProtKB-UniRule"/>
</dbReference>
<dbReference type="Gene3D" id="3.90.1300.10">
    <property type="entry name" value="Amidase signature (AS) domain"/>
    <property type="match status" value="1"/>
</dbReference>
<dbReference type="HAMAP" id="MF_00120">
    <property type="entry name" value="GatA"/>
    <property type="match status" value="1"/>
</dbReference>
<dbReference type="InterPro" id="IPR000120">
    <property type="entry name" value="Amidase"/>
</dbReference>
<dbReference type="InterPro" id="IPR023631">
    <property type="entry name" value="Amidase_dom"/>
</dbReference>
<dbReference type="InterPro" id="IPR036928">
    <property type="entry name" value="AS_sf"/>
</dbReference>
<dbReference type="InterPro" id="IPR004412">
    <property type="entry name" value="GatA"/>
</dbReference>
<dbReference type="PANTHER" id="PTHR11895:SF7">
    <property type="entry name" value="GLUTAMYL-TRNA(GLN) AMIDOTRANSFERASE SUBUNIT A, MITOCHONDRIAL"/>
    <property type="match status" value="1"/>
</dbReference>
<dbReference type="PANTHER" id="PTHR11895">
    <property type="entry name" value="TRANSAMIDASE"/>
    <property type="match status" value="1"/>
</dbReference>
<dbReference type="Pfam" id="PF01425">
    <property type="entry name" value="Amidase"/>
    <property type="match status" value="1"/>
</dbReference>
<dbReference type="SUPFAM" id="SSF75304">
    <property type="entry name" value="Amidase signature (AS) enzymes"/>
    <property type="match status" value="1"/>
</dbReference>
<proteinExistence type="inferred from homology"/>
<evidence type="ECO:0000255" key="1">
    <source>
        <dbReference type="HAMAP-Rule" id="MF_03150"/>
    </source>
</evidence>
<comment type="function">
    <text evidence="1">Allows the formation of correctly charged Gln-tRNA(Gln) through the transamidation of misacylated Glu-tRNA(Gln) in the mitochondria. The reaction takes place in the presence of glutamine and ATP through an activated gamma-phospho-Glu-tRNA(Gln).</text>
</comment>
<comment type="catalytic activity">
    <reaction evidence="1">
        <text>L-glutamyl-tRNA(Gln) + L-glutamine + ATP + H2O = L-glutaminyl-tRNA(Gln) + L-glutamate + ADP + phosphate + H(+)</text>
        <dbReference type="Rhea" id="RHEA:17521"/>
        <dbReference type="Rhea" id="RHEA-COMP:9681"/>
        <dbReference type="Rhea" id="RHEA-COMP:9684"/>
        <dbReference type="ChEBI" id="CHEBI:15377"/>
        <dbReference type="ChEBI" id="CHEBI:15378"/>
        <dbReference type="ChEBI" id="CHEBI:29985"/>
        <dbReference type="ChEBI" id="CHEBI:30616"/>
        <dbReference type="ChEBI" id="CHEBI:43474"/>
        <dbReference type="ChEBI" id="CHEBI:58359"/>
        <dbReference type="ChEBI" id="CHEBI:78520"/>
        <dbReference type="ChEBI" id="CHEBI:78521"/>
        <dbReference type="ChEBI" id="CHEBI:456216"/>
        <dbReference type="EC" id="6.3.5.7"/>
    </reaction>
</comment>
<comment type="subunit">
    <text evidence="1">Subunit of the heterotrimeric GatCAB amidotransferase (AdT) complex, composed of A, B and C subunits.</text>
</comment>
<comment type="subcellular location">
    <subcellularLocation>
        <location evidence="1">Mitochondrion</location>
    </subcellularLocation>
</comment>
<comment type="similarity">
    <text evidence="1">Belongs to the amidase family. GatA subfamily.</text>
</comment>
<protein>
    <recommendedName>
        <fullName evidence="1">Glutamyl-tRNA(Gln) amidotransferase subunit A, mitochondrial</fullName>
        <shortName evidence="1">Glu-AdT subunit A</shortName>
        <ecNumber evidence="1">6.3.5.7</ecNumber>
    </recommendedName>
</protein>
<organism>
    <name type="scientific">Fusarium vanettenii (strain ATCC MYA-4622 / CBS 123669 / FGSC 9596 / NRRL 45880 / 77-13-4)</name>
    <name type="common">Fusarium solani subsp. pisi</name>
    <dbReference type="NCBI Taxonomy" id="660122"/>
    <lineage>
        <taxon>Eukaryota</taxon>
        <taxon>Fungi</taxon>
        <taxon>Dikarya</taxon>
        <taxon>Ascomycota</taxon>
        <taxon>Pezizomycotina</taxon>
        <taxon>Sordariomycetes</taxon>
        <taxon>Hypocreomycetidae</taxon>
        <taxon>Hypocreales</taxon>
        <taxon>Nectriaceae</taxon>
        <taxon>Fusarium</taxon>
        <taxon>Fusarium solani species complex</taxon>
        <taxon>Fusarium vanettenii</taxon>
    </lineage>
</organism>
<gene>
    <name type="ORF">NECHADRAFT_104567</name>
</gene>
<feature type="chain" id="PRO_0000413355" description="Glutamyl-tRNA(Gln) amidotransferase subunit A, mitochondrial">
    <location>
        <begin position="1"/>
        <end position="511"/>
    </location>
</feature>
<feature type="active site" description="Charge relay system" evidence="1">
    <location>
        <position position="72"/>
    </location>
</feature>
<feature type="active site" description="Charge relay system" evidence="1">
    <location>
        <position position="149"/>
    </location>
</feature>
<feature type="active site" description="Acyl-ester intermediate" evidence="1">
    <location>
        <position position="173"/>
    </location>
</feature>
<name>GATA_FUSV7</name>
<accession>C7YSE7</accession>
<sequence>MSAAVVRRLALNSPRHTIISRRAVHLQPLCGQQYVKSKLRNWTCLTFLGESVTAGSSIPLRKDAKPFKLAVKDNIATADFPTQCASQILSSHPSPFEATVVRQLRERGASIVGKTNMDEFGMGSHSTNSIHGAVRNPLAEDDDVSAGGSSGGSAVAVRLGDADVALGTDTGGSIRLPAAYTGTVGYKPSYGMISRFGVVPYANSLDTVGFLASEVKPIHDLVFKTGLYQEHDSSDPTSLPIASRKRCAETTPSTLPDLSKLNIGIPLEYNIEELDPSIRDAWVAAASALEAQGATLVPISLPSTTEALCAYYVLAPAEASSNLAKYDGVRYGKRGEGSDAVGETLYSDTRGAGFGDEVKRRILLGTYSLSSEAMDNYFIQAQKVRRMVQQDFDRVFRLDNPLYEPAQFDLSDMAEATGMEDKRGPLQVDFILCPTAPTFPPRLDEIKEQSSVDVYMNDVFTVPASLAGLPAVSVPAKVEGSRFPAGLQVIGQYWDDQRVLLLAEKLKEAVA</sequence>
<keyword id="KW-0067">ATP-binding</keyword>
<keyword id="KW-0436">Ligase</keyword>
<keyword id="KW-0496">Mitochondrion</keyword>
<keyword id="KW-0547">Nucleotide-binding</keyword>
<keyword id="KW-0648">Protein biosynthesis</keyword>
<keyword id="KW-1185">Reference proteome</keyword>